<dbReference type="EMBL" id="BA000017">
    <property type="protein sequence ID" value="BAB57414.1"/>
    <property type="molecule type" value="Genomic_DNA"/>
</dbReference>
<dbReference type="RefSeq" id="WP_001015601.1">
    <property type="nucleotide sequence ID" value="NC_002758.2"/>
</dbReference>
<dbReference type="SMR" id="P67630"/>
<dbReference type="KEGG" id="sav:SAV1252"/>
<dbReference type="HOGENOM" id="CLU_027562_9_0_9"/>
<dbReference type="PhylomeDB" id="P67630"/>
<dbReference type="Proteomes" id="UP000002481">
    <property type="component" value="Chromosome"/>
</dbReference>
<dbReference type="GO" id="GO:0005737">
    <property type="term" value="C:cytoplasm"/>
    <property type="evidence" value="ECO:0007669"/>
    <property type="project" value="UniProtKB-SubCell"/>
</dbReference>
<dbReference type="GO" id="GO:0003677">
    <property type="term" value="F:DNA binding"/>
    <property type="evidence" value="ECO:0007669"/>
    <property type="project" value="UniProtKB-KW"/>
</dbReference>
<dbReference type="GO" id="GO:0009037">
    <property type="term" value="F:tyrosine-based site-specific recombinase activity"/>
    <property type="evidence" value="ECO:0007669"/>
    <property type="project" value="UniProtKB-UniRule"/>
</dbReference>
<dbReference type="GO" id="GO:0051301">
    <property type="term" value="P:cell division"/>
    <property type="evidence" value="ECO:0007669"/>
    <property type="project" value="UniProtKB-KW"/>
</dbReference>
<dbReference type="GO" id="GO:0007059">
    <property type="term" value="P:chromosome segregation"/>
    <property type="evidence" value="ECO:0007669"/>
    <property type="project" value="UniProtKB-UniRule"/>
</dbReference>
<dbReference type="GO" id="GO:0006313">
    <property type="term" value="P:DNA transposition"/>
    <property type="evidence" value="ECO:0007669"/>
    <property type="project" value="UniProtKB-UniRule"/>
</dbReference>
<dbReference type="CDD" id="cd00798">
    <property type="entry name" value="INT_XerDC_C"/>
    <property type="match status" value="1"/>
</dbReference>
<dbReference type="Gene3D" id="1.10.150.130">
    <property type="match status" value="1"/>
</dbReference>
<dbReference type="Gene3D" id="1.10.443.10">
    <property type="entry name" value="Intergrase catalytic core"/>
    <property type="match status" value="1"/>
</dbReference>
<dbReference type="HAMAP" id="MF_01808">
    <property type="entry name" value="Recomb_XerC_XerD"/>
    <property type="match status" value="1"/>
</dbReference>
<dbReference type="InterPro" id="IPR044068">
    <property type="entry name" value="CB"/>
</dbReference>
<dbReference type="InterPro" id="IPR011010">
    <property type="entry name" value="DNA_brk_join_enz"/>
</dbReference>
<dbReference type="InterPro" id="IPR013762">
    <property type="entry name" value="Integrase-like_cat_sf"/>
</dbReference>
<dbReference type="InterPro" id="IPR002104">
    <property type="entry name" value="Integrase_catalytic"/>
</dbReference>
<dbReference type="InterPro" id="IPR010998">
    <property type="entry name" value="Integrase_recombinase_N"/>
</dbReference>
<dbReference type="InterPro" id="IPR004107">
    <property type="entry name" value="Integrase_SAM-like_N"/>
</dbReference>
<dbReference type="InterPro" id="IPR011931">
    <property type="entry name" value="Recomb_XerC"/>
</dbReference>
<dbReference type="InterPro" id="IPR023009">
    <property type="entry name" value="Tyrosine_recombinase_XerC/XerD"/>
</dbReference>
<dbReference type="InterPro" id="IPR050090">
    <property type="entry name" value="Tyrosine_recombinase_XerCD"/>
</dbReference>
<dbReference type="NCBIfam" id="NF001399">
    <property type="entry name" value="PRK00283.1"/>
    <property type="match status" value="1"/>
</dbReference>
<dbReference type="NCBIfam" id="NF040815">
    <property type="entry name" value="recomb_XerA_Arch"/>
    <property type="match status" value="1"/>
</dbReference>
<dbReference type="NCBIfam" id="TIGR02224">
    <property type="entry name" value="recomb_XerC"/>
    <property type="match status" value="1"/>
</dbReference>
<dbReference type="PANTHER" id="PTHR30349">
    <property type="entry name" value="PHAGE INTEGRASE-RELATED"/>
    <property type="match status" value="1"/>
</dbReference>
<dbReference type="PANTHER" id="PTHR30349:SF77">
    <property type="entry name" value="TYROSINE RECOMBINASE XERC"/>
    <property type="match status" value="1"/>
</dbReference>
<dbReference type="Pfam" id="PF02899">
    <property type="entry name" value="Phage_int_SAM_1"/>
    <property type="match status" value="1"/>
</dbReference>
<dbReference type="Pfam" id="PF00589">
    <property type="entry name" value="Phage_integrase"/>
    <property type="match status" value="1"/>
</dbReference>
<dbReference type="SUPFAM" id="SSF56349">
    <property type="entry name" value="DNA breaking-rejoining enzymes"/>
    <property type="match status" value="1"/>
</dbReference>
<dbReference type="PROSITE" id="PS51900">
    <property type="entry name" value="CB"/>
    <property type="match status" value="1"/>
</dbReference>
<dbReference type="PROSITE" id="PS51898">
    <property type="entry name" value="TYR_RECOMBINASE"/>
    <property type="match status" value="1"/>
</dbReference>
<accession>P67630</accession>
<accession>Q99UL9</accession>
<name>XERC_STAAM</name>
<keyword id="KW-0131">Cell cycle</keyword>
<keyword id="KW-0132">Cell division</keyword>
<keyword id="KW-0159">Chromosome partition</keyword>
<keyword id="KW-0963">Cytoplasm</keyword>
<keyword id="KW-0229">DNA integration</keyword>
<keyword id="KW-0233">DNA recombination</keyword>
<keyword id="KW-0238">DNA-binding</keyword>
<protein>
    <recommendedName>
        <fullName evidence="1">Tyrosine recombinase XerC</fullName>
    </recommendedName>
</protein>
<reference key="1">
    <citation type="journal article" date="2001" name="Lancet">
        <title>Whole genome sequencing of meticillin-resistant Staphylococcus aureus.</title>
        <authorList>
            <person name="Kuroda M."/>
            <person name="Ohta T."/>
            <person name="Uchiyama I."/>
            <person name="Baba T."/>
            <person name="Yuzawa H."/>
            <person name="Kobayashi I."/>
            <person name="Cui L."/>
            <person name="Oguchi A."/>
            <person name="Aoki K."/>
            <person name="Nagai Y."/>
            <person name="Lian J.-Q."/>
            <person name="Ito T."/>
            <person name="Kanamori M."/>
            <person name="Matsumaru H."/>
            <person name="Maruyama A."/>
            <person name="Murakami H."/>
            <person name="Hosoyama A."/>
            <person name="Mizutani-Ui Y."/>
            <person name="Takahashi N.K."/>
            <person name="Sawano T."/>
            <person name="Inoue R."/>
            <person name="Kaito C."/>
            <person name="Sekimizu K."/>
            <person name="Hirakawa H."/>
            <person name="Kuhara S."/>
            <person name="Goto S."/>
            <person name="Yabuzaki J."/>
            <person name="Kanehisa M."/>
            <person name="Yamashita A."/>
            <person name="Oshima K."/>
            <person name="Furuya K."/>
            <person name="Yoshino C."/>
            <person name="Shiba T."/>
            <person name="Hattori M."/>
            <person name="Ogasawara N."/>
            <person name="Hayashi H."/>
            <person name="Hiramatsu K."/>
        </authorList>
    </citation>
    <scope>NUCLEOTIDE SEQUENCE [LARGE SCALE GENOMIC DNA]</scope>
    <source>
        <strain>Mu50 / ATCC 700699</strain>
    </source>
</reference>
<proteinExistence type="inferred from homology"/>
<gene>
    <name evidence="1" type="primary">xerC</name>
    <name type="ordered locus">SAV1252</name>
</gene>
<comment type="function">
    <text evidence="1">Site-specific tyrosine recombinase, which acts by catalyzing the cutting and rejoining of the recombining DNA molecules. The XerC-XerD complex is essential to convert dimers of the bacterial chromosome into monomers to permit their segregation at cell division. It also contributes to the segregational stability of plasmids.</text>
</comment>
<comment type="subunit">
    <text evidence="1">Forms a cyclic heterotetrameric complex composed of two molecules of XerC and two molecules of XerD.</text>
</comment>
<comment type="subcellular location">
    <subcellularLocation>
        <location evidence="1">Cytoplasm</location>
    </subcellularLocation>
</comment>
<comment type="similarity">
    <text evidence="1">Belongs to the 'phage' integrase family. XerC subfamily.</text>
</comment>
<feature type="chain" id="PRO_0000095330" description="Tyrosine recombinase XerC">
    <location>
        <begin position="1"/>
        <end position="298"/>
    </location>
</feature>
<feature type="domain" description="Core-binding (CB)" evidence="3">
    <location>
        <begin position="1"/>
        <end position="84"/>
    </location>
</feature>
<feature type="domain" description="Tyr recombinase" evidence="2">
    <location>
        <begin position="105"/>
        <end position="286"/>
    </location>
</feature>
<feature type="active site" evidence="1">
    <location>
        <position position="145"/>
    </location>
</feature>
<feature type="active site" evidence="1">
    <location>
        <position position="169"/>
    </location>
</feature>
<feature type="active site" evidence="1">
    <location>
        <position position="238"/>
    </location>
</feature>
<feature type="active site" evidence="1">
    <location>
        <position position="241"/>
    </location>
</feature>
<feature type="active site" evidence="1">
    <location>
        <position position="264"/>
    </location>
</feature>
<feature type="active site" description="O-(3'-phospho-DNA)-tyrosine intermediate" evidence="1">
    <location>
        <position position="273"/>
    </location>
</feature>
<sequence length="298" mass="35154">MNHIQEAFLNTLKVERNFSEHTLKSYQDDLIQFNQFLEQEHLQLKTFEYRDARNYLSYLYSNHLKRTSVSRKISTLRTFYEYWMTLDENIINPFVQLVHPKKEKYLPQFFYEEEMEALFKTVEEDTSKNLRDRVILELLYATGIRVSELVNIKKQDIDFYANGVTVLGKGSKERFVPFGAYCRQSIENYLEHFKPIQSCNHDFLILNMKGEAITERGVRYVLNDIVKRTAGVSEIHPHKLRHTFATHLLNQGADLRTVQSLLGHVNLSTTGKYTHVSNQQLRKVYLNAHPRAKKENET</sequence>
<organism>
    <name type="scientific">Staphylococcus aureus (strain Mu50 / ATCC 700699)</name>
    <dbReference type="NCBI Taxonomy" id="158878"/>
    <lineage>
        <taxon>Bacteria</taxon>
        <taxon>Bacillati</taxon>
        <taxon>Bacillota</taxon>
        <taxon>Bacilli</taxon>
        <taxon>Bacillales</taxon>
        <taxon>Staphylococcaceae</taxon>
        <taxon>Staphylococcus</taxon>
    </lineage>
</organism>
<evidence type="ECO:0000255" key="1">
    <source>
        <dbReference type="HAMAP-Rule" id="MF_01808"/>
    </source>
</evidence>
<evidence type="ECO:0000255" key="2">
    <source>
        <dbReference type="PROSITE-ProRule" id="PRU01246"/>
    </source>
</evidence>
<evidence type="ECO:0000255" key="3">
    <source>
        <dbReference type="PROSITE-ProRule" id="PRU01248"/>
    </source>
</evidence>